<name>ATPG_CAUVN</name>
<accession>B8H5I1</accession>
<reference key="1">
    <citation type="journal article" date="2010" name="J. Bacteriol.">
        <title>The genetic basis of laboratory adaptation in Caulobacter crescentus.</title>
        <authorList>
            <person name="Marks M.E."/>
            <person name="Castro-Rojas C.M."/>
            <person name="Teiling C."/>
            <person name="Du L."/>
            <person name="Kapatral V."/>
            <person name="Walunas T.L."/>
            <person name="Crosson S."/>
        </authorList>
    </citation>
    <scope>NUCLEOTIDE SEQUENCE [LARGE SCALE GENOMIC DNA]</scope>
    <source>
        <strain>NA1000 / CB15N</strain>
    </source>
</reference>
<sequence>MASLKEMRNRISSVKATQKITKAMQMVAAAKLRRSQDAAESARPYARRLASVIANLAAGVSGDGAPKLLAGTGRDDRHLVVVAAADRGLAGGFTSSIVRAARAHIDGLIAQGKDVRVVCVGKKVTAQLAKPYAGRIVETFDLSSYRQLTLSVAQPIADVITREYEAGETDVVTLFYSRFKSVVQQIPTGLQLIPAVVETGEAASGPTAVYEYEPSEEAILETLLPRNLTVQILSALLDNMAGFYASQMTAMDNATRNAGDMIKRYTLEYNRSRQAQITKELIEIISGAEAV</sequence>
<dbReference type="EMBL" id="CP001340">
    <property type="protein sequence ID" value="ACL97026.1"/>
    <property type="molecule type" value="Genomic_DNA"/>
</dbReference>
<dbReference type="RefSeq" id="WP_010921277.1">
    <property type="nucleotide sequence ID" value="NC_011916.1"/>
</dbReference>
<dbReference type="RefSeq" id="YP_002518934.1">
    <property type="nucleotide sequence ID" value="NC_011916.1"/>
</dbReference>
<dbReference type="SMR" id="B8H5I1"/>
<dbReference type="GeneID" id="7332559"/>
<dbReference type="KEGG" id="ccs:CCNA_03561"/>
<dbReference type="PATRIC" id="fig|565050.3.peg.3476"/>
<dbReference type="HOGENOM" id="CLU_050669_0_1_5"/>
<dbReference type="OrthoDB" id="9812769at2"/>
<dbReference type="PhylomeDB" id="B8H5I1"/>
<dbReference type="Proteomes" id="UP000001364">
    <property type="component" value="Chromosome"/>
</dbReference>
<dbReference type="GO" id="GO:0005886">
    <property type="term" value="C:plasma membrane"/>
    <property type="evidence" value="ECO:0007669"/>
    <property type="project" value="UniProtKB-SubCell"/>
</dbReference>
<dbReference type="GO" id="GO:0045259">
    <property type="term" value="C:proton-transporting ATP synthase complex"/>
    <property type="evidence" value="ECO:0007669"/>
    <property type="project" value="UniProtKB-KW"/>
</dbReference>
<dbReference type="GO" id="GO:0005524">
    <property type="term" value="F:ATP binding"/>
    <property type="evidence" value="ECO:0007669"/>
    <property type="project" value="UniProtKB-UniRule"/>
</dbReference>
<dbReference type="GO" id="GO:0046933">
    <property type="term" value="F:proton-transporting ATP synthase activity, rotational mechanism"/>
    <property type="evidence" value="ECO:0007669"/>
    <property type="project" value="UniProtKB-UniRule"/>
</dbReference>
<dbReference type="GO" id="GO:0042777">
    <property type="term" value="P:proton motive force-driven plasma membrane ATP synthesis"/>
    <property type="evidence" value="ECO:0007669"/>
    <property type="project" value="UniProtKB-UniRule"/>
</dbReference>
<dbReference type="CDD" id="cd12151">
    <property type="entry name" value="F1-ATPase_gamma"/>
    <property type="match status" value="1"/>
</dbReference>
<dbReference type="FunFam" id="1.10.287.80:FF:000001">
    <property type="entry name" value="ATP synthase gamma chain"/>
    <property type="match status" value="1"/>
</dbReference>
<dbReference type="FunFam" id="1.10.287.80:FF:000003">
    <property type="entry name" value="ATP synthase gamma chain, chloroplastic"/>
    <property type="match status" value="1"/>
</dbReference>
<dbReference type="Gene3D" id="3.40.1380.10">
    <property type="match status" value="1"/>
</dbReference>
<dbReference type="Gene3D" id="1.10.287.80">
    <property type="entry name" value="ATP synthase, gamma subunit, helix hairpin domain"/>
    <property type="match status" value="1"/>
</dbReference>
<dbReference type="HAMAP" id="MF_00815">
    <property type="entry name" value="ATP_synth_gamma_bact"/>
    <property type="match status" value="1"/>
</dbReference>
<dbReference type="InterPro" id="IPR035968">
    <property type="entry name" value="ATP_synth_F1_ATPase_gsu"/>
</dbReference>
<dbReference type="InterPro" id="IPR000131">
    <property type="entry name" value="ATP_synth_F1_gsu"/>
</dbReference>
<dbReference type="InterPro" id="IPR023632">
    <property type="entry name" value="ATP_synth_F1_gsu_CS"/>
</dbReference>
<dbReference type="NCBIfam" id="TIGR01146">
    <property type="entry name" value="ATPsyn_F1gamma"/>
    <property type="match status" value="1"/>
</dbReference>
<dbReference type="NCBIfam" id="NF004146">
    <property type="entry name" value="PRK05621.1-4"/>
    <property type="match status" value="1"/>
</dbReference>
<dbReference type="PANTHER" id="PTHR11693">
    <property type="entry name" value="ATP SYNTHASE GAMMA CHAIN"/>
    <property type="match status" value="1"/>
</dbReference>
<dbReference type="PANTHER" id="PTHR11693:SF22">
    <property type="entry name" value="ATP SYNTHASE SUBUNIT GAMMA, MITOCHONDRIAL"/>
    <property type="match status" value="1"/>
</dbReference>
<dbReference type="Pfam" id="PF00231">
    <property type="entry name" value="ATP-synt"/>
    <property type="match status" value="1"/>
</dbReference>
<dbReference type="PIRSF" id="PIRSF039089">
    <property type="entry name" value="ATP_synthase_gamma"/>
    <property type="match status" value="1"/>
</dbReference>
<dbReference type="PRINTS" id="PR00126">
    <property type="entry name" value="ATPASEGAMMA"/>
</dbReference>
<dbReference type="SUPFAM" id="SSF52943">
    <property type="entry name" value="ATP synthase (F1-ATPase), gamma subunit"/>
    <property type="match status" value="1"/>
</dbReference>
<dbReference type="PROSITE" id="PS00153">
    <property type="entry name" value="ATPASE_GAMMA"/>
    <property type="match status" value="1"/>
</dbReference>
<gene>
    <name evidence="1" type="primary">atpG</name>
    <name type="ordered locus">CCNA_03561</name>
</gene>
<comment type="function">
    <text evidence="1">Produces ATP from ADP in the presence of a proton gradient across the membrane. The gamma chain is believed to be important in regulating ATPase activity and the flow of protons through the CF(0) complex.</text>
</comment>
<comment type="subunit">
    <text evidence="1">F-type ATPases have 2 components, CF(1) - the catalytic core - and CF(0) - the membrane proton channel. CF(1) has five subunits: alpha(3), beta(3), gamma(1), delta(1), epsilon(1). CF(0) has three main subunits: a, b and c.</text>
</comment>
<comment type="subcellular location">
    <subcellularLocation>
        <location evidence="1">Cell inner membrane</location>
        <topology evidence="1">Peripheral membrane protein</topology>
    </subcellularLocation>
</comment>
<comment type="similarity">
    <text evidence="1">Belongs to the ATPase gamma chain family.</text>
</comment>
<protein>
    <recommendedName>
        <fullName evidence="1">ATP synthase gamma chain</fullName>
    </recommendedName>
    <alternativeName>
        <fullName evidence="1">ATP synthase F1 sector gamma subunit</fullName>
    </alternativeName>
    <alternativeName>
        <fullName evidence="1">F-ATPase gamma subunit</fullName>
    </alternativeName>
</protein>
<organism>
    <name type="scientific">Caulobacter vibrioides (strain NA1000 / CB15N)</name>
    <name type="common">Caulobacter crescentus</name>
    <dbReference type="NCBI Taxonomy" id="565050"/>
    <lineage>
        <taxon>Bacteria</taxon>
        <taxon>Pseudomonadati</taxon>
        <taxon>Pseudomonadota</taxon>
        <taxon>Alphaproteobacteria</taxon>
        <taxon>Caulobacterales</taxon>
        <taxon>Caulobacteraceae</taxon>
        <taxon>Caulobacter</taxon>
    </lineage>
</organism>
<proteinExistence type="inferred from homology"/>
<keyword id="KW-0066">ATP synthesis</keyword>
<keyword id="KW-0997">Cell inner membrane</keyword>
<keyword id="KW-1003">Cell membrane</keyword>
<keyword id="KW-0139">CF(1)</keyword>
<keyword id="KW-0375">Hydrogen ion transport</keyword>
<keyword id="KW-0406">Ion transport</keyword>
<keyword id="KW-0472">Membrane</keyword>
<keyword id="KW-1185">Reference proteome</keyword>
<keyword id="KW-0813">Transport</keyword>
<evidence type="ECO:0000255" key="1">
    <source>
        <dbReference type="HAMAP-Rule" id="MF_00815"/>
    </source>
</evidence>
<feature type="chain" id="PRO_1000148608" description="ATP synthase gamma chain">
    <location>
        <begin position="1"/>
        <end position="291"/>
    </location>
</feature>